<protein>
    <recommendedName>
        <fullName evidence="1">Histidinol-phosphate aminotransferase</fullName>
        <ecNumber evidence="1">2.6.1.9</ecNumber>
    </recommendedName>
    <alternativeName>
        <fullName evidence="1">Imidazole acetol-phosphate transaminase</fullName>
    </alternativeName>
</protein>
<sequence length="385" mass="41042">MSAPTVPGAGIGLDDLPLRANLRGKKPYGAPQLTVPVQLNTNENPHPPSKALVDDVAESIRAVAAELHRYPDRDAVALRADLAAYLTRQTGIAVDTANVWAANGSNEILQQLLQAFGGPGRRALGFVPSYSMHPIISEGIDTEWVEARRNADFSLDIDHAVATIAERRPDVVFVTSPNNPTGHSIPGADLARILDAAPGIVVVDEAYAEFSAQPSAIGLIDRYPAKLVVSRTMSKAFAFAGGRLGYLVAAPAVIDALLLVRLPYHLSVVTQAAARAALRHADETLASVAELAAQRDRVAAELAASGFRVVPSDANFLLFGRFADAPRAWQRYLDHGVLIRDVGIPGHLRATIGLAAENDEFLRVSRLLAADELINDESDESTGTP</sequence>
<evidence type="ECO:0000255" key="1">
    <source>
        <dbReference type="HAMAP-Rule" id="MF_01023"/>
    </source>
</evidence>
<comment type="catalytic activity">
    <reaction evidence="1">
        <text>L-histidinol phosphate + 2-oxoglutarate = 3-(imidazol-4-yl)-2-oxopropyl phosphate + L-glutamate</text>
        <dbReference type="Rhea" id="RHEA:23744"/>
        <dbReference type="ChEBI" id="CHEBI:16810"/>
        <dbReference type="ChEBI" id="CHEBI:29985"/>
        <dbReference type="ChEBI" id="CHEBI:57766"/>
        <dbReference type="ChEBI" id="CHEBI:57980"/>
        <dbReference type="EC" id="2.6.1.9"/>
    </reaction>
</comment>
<comment type="cofactor">
    <cofactor evidence="1">
        <name>pyridoxal 5'-phosphate</name>
        <dbReference type="ChEBI" id="CHEBI:597326"/>
    </cofactor>
</comment>
<comment type="pathway">
    <text evidence="1">Amino-acid biosynthesis; L-histidine biosynthesis; L-histidine from 5-phospho-alpha-D-ribose 1-diphosphate: step 7/9.</text>
</comment>
<comment type="subunit">
    <text evidence="1">Homodimer.</text>
</comment>
<comment type="similarity">
    <text evidence="1">Belongs to the class-II pyridoxal-phosphate-dependent aminotransferase family. Histidinol-phosphate aminotransferase subfamily.</text>
</comment>
<accession>Q5YYP9</accession>
<gene>
    <name evidence="1" type="primary">hisC</name>
    <name type="ordered locus">NFA_18460</name>
</gene>
<feature type="chain" id="PRO_0000153406" description="Histidinol-phosphate aminotransferase">
    <location>
        <begin position="1"/>
        <end position="385"/>
    </location>
</feature>
<feature type="modified residue" description="N6-(pyridoxal phosphate)lysine" evidence="1">
    <location>
        <position position="235"/>
    </location>
</feature>
<reference key="1">
    <citation type="journal article" date="2004" name="Proc. Natl. Acad. Sci. U.S.A.">
        <title>The complete genomic sequence of Nocardia farcinica IFM 10152.</title>
        <authorList>
            <person name="Ishikawa J."/>
            <person name="Yamashita A."/>
            <person name="Mikami Y."/>
            <person name="Hoshino Y."/>
            <person name="Kurita H."/>
            <person name="Hotta K."/>
            <person name="Shiba T."/>
            <person name="Hattori M."/>
        </authorList>
    </citation>
    <scope>NUCLEOTIDE SEQUENCE [LARGE SCALE GENOMIC DNA]</scope>
    <source>
        <strain>IFM 10152</strain>
    </source>
</reference>
<proteinExistence type="inferred from homology"/>
<name>HIS8_NOCFA</name>
<organism>
    <name type="scientific">Nocardia farcinica (strain IFM 10152)</name>
    <dbReference type="NCBI Taxonomy" id="247156"/>
    <lineage>
        <taxon>Bacteria</taxon>
        <taxon>Bacillati</taxon>
        <taxon>Actinomycetota</taxon>
        <taxon>Actinomycetes</taxon>
        <taxon>Mycobacteriales</taxon>
        <taxon>Nocardiaceae</taxon>
        <taxon>Nocardia</taxon>
    </lineage>
</organism>
<keyword id="KW-0028">Amino-acid biosynthesis</keyword>
<keyword id="KW-0032">Aminotransferase</keyword>
<keyword id="KW-0368">Histidine biosynthesis</keyword>
<keyword id="KW-0663">Pyridoxal phosphate</keyword>
<keyword id="KW-1185">Reference proteome</keyword>
<keyword id="KW-0808">Transferase</keyword>
<dbReference type="EC" id="2.6.1.9" evidence="1"/>
<dbReference type="EMBL" id="AP006618">
    <property type="protein sequence ID" value="BAD56692.1"/>
    <property type="molecule type" value="Genomic_DNA"/>
</dbReference>
<dbReference type="RefSeq" id="WP_011208377.1">
    <property type="nucleotide sequence ID" value="NC_006361.1"/>
</dbReference>
<dbReference type="SMR" id="Q5YYP9"/>
<dbReference type="STRING" id="247156.NFA_18460"/>
<dbReference type="GeneID" id="61132630"/>
<dbReference type="KEGG" id="nfa:NFA_18460"/>
<dbReference type="eggNOG" id="COG0079">
    <property type="taxonomic scope" value="Bacteria"/>
</dbReference>
<dbReference type="HOGENOM" id="CLU_017584_3_1_11"/>
<dbReference type="OrthoDB" id="9809616at2"/>
<dbReference type="UniPathway" id="UPA00031">
    <property type="reaction ID" value="UER00012"/>
</dbReference>
<dbReference type="Proteomes" id="UP000006820">
    <property type="component" value="Chromosome"/>
</dbReference>
<dbReference type="GO" id="GO:0004400">
    <property type="term" value="F:histidinol-phosphate transaminase activity"/>
    <property type="evidence" value="ECO:0007669"/>
    <property type="project" value="UniProtKB-UniRule"/>
</dbReference>
<dbReference type="GO" id="GO:0030170">
    <property type="term" value="F:pyridoxal phosphate binding"/>
    <property type="evidence" value="ECO:0007669"/>
    <property type="project" value="InterPro"/>
</dbReference>
<dbReference type="GO" id="GO:0000105">
    <property type="term" value="P:L-histidine biosynthetic process"/>
    <property type="evidence" value="ECO:0007669"/>
    <property type="project" value="UniProtKB-UniRule"/>
</dbReference>
<dbReference type="CDD" id="cd00609">
    <property type="entry name" value="AAT_like"/>
    <property type="match status" value="1"/>
</dbReference>
<dbReference type="Gene3D" id="3.90.1150.10">
    <property type="entry name" value="Aspartate Aminotransferase, domain 1"/>
    <property type="match status" value="1"/>
</dbReference>
<dbReference type="Gene3D" id="3.40.640.10">
    <property type="entry name" value="Type I PLP-dependent aspartate aminotransferase-like (Major domain)"/>
    <property type="match status" value="1"/>
</dbReference>
<dbReference type="HAMAP" id="MF_01023">
    <property type="entry name" value="HisC_aminotrans_2"/>
    <property type="match status" value="1"/>
</dbReference>
<dbReference type="InterPro" id="IPR001917">
    <property type="entry name" value="Aminotrans_II_pyridoxalP_BS"/>
</dbReference>
<dbReference type="InterPro" id="IPR004839">
    <property type="entry name" value="Aminotransferase_I/II_large"/>
</dbReference>
<dbReference type="InterPro" id="IPR005861">
    <property type="entry name" value="HisP_aminotrans"/>
</dbReference>
<dbReference type="InterPro" id="IPR015424">
    <property type="entry name" value="PyrdxlP-dep_Trfase"/>
</dbReference>
<dbReference type="InterPro" id="IPR015421">
    <property type="entry name" value="PyrdxlP-dep_Trfase_major"/>
</dbReference>
<dbReference type="InterPro" id="IPR015422">
    <property type="entry name" value="PyrdxlP-dep_Trfase_small"/>
</dbReference>
<dbReference type="NCBIfam" id="TIGR01141">
    <property type="entry name" value="hisC"/>
    <property type="match status" value="1"/>
</dbReference>
<dbReference type="NCBIfam" id="NF002877">
    <property type="entry name" value="PRK03317.1"/>
    <property type="match status" value="1"/>
</dbReference>
<dbReference type="PANTHER" id="PTHR42885:SF2">
    <property type="entry name" value="HISTIDINOL-PHOSPHATE AMINOTRANSFERASE"/>
    <property type="match status" value="1"/>
</dbReference>
<dbReference type="PANTHER" id="PTHR42885">
    <property type="entry name" value="HISTIDINOL-PHOSPHATE AMINOTRANSFERASE-RELATED"/>
    <property type="match status" value="1"/>
</dbReference>
<dbReference type="Pfam" id="PF00155">
    <property type="entry name" value="Aminotran_1_2"/>
    <property type="match status" value="1"/>
</dbReference>
<dbReference type="SUPFAM" id="SSF53383">
    <property type="entry name" value="PLP-dependent transferases"/>
    <property type="match status" value="1"/>
</dbReference>
<dbReference type="PROSITE" id="PS00599">
    <property type="entry name" value="AA_TRANSFER_CLASS_2"/>
    <property type="match status" value="1"/>
</dbReference>